<gene>
    <name evidence="1 2" type="primary">ilvD</name>
    <name type="ordered locus">BCE_1937</name>
</gene>
<protein>
    <recommendedName>
        <fullName evidence="1">Dihydroxy-acid dehydratase</fullName>
        <shortName evidence="1">DAD</shortName>
        <ecNumber evidence="1">4.2.1.9</ecNumber>
    </recommendedName>
</protein>
<proteinExistence type="inferred from homology"/>
<reference key="1">
    <citation type="journal article" date="2004" name="Nucleic Acids Res.">
        <title>The genome sequence of Bacillus cereus ATCC 10987 reveals metabolic adaptations and a large plasmid related to Bacillus anthracis pXO1.</title>
        <authorList>
            <person name="Rasko D.A."/>
            <person name="Ravel J."/>
            <person name="Oekstad O.A."/>
            <person name="Helgason E."/>
            <person name="Cer R.Z."/>
            <person name="Jiang L."/>
            <person name="Shores K.A."/>
            <person name="Fouts D.E."/>
            <person name="Tourasse N.J."/>
            <person name="Angiuoli S.V."/>
            <person name="Kolonay J.F."/>
            <person name="Nelson W.C."/>
            <person name="Kolstoe A.-B."/>
            <person name="Fraser C.M."/>
            <person name="Read T.D."/>
        </authorList>
    </citation>
    <scope>NUCLEOTIDE SEQUENCE [LARGE SCALE GENOMIC DNA]</scope>
    <source>
        <strain>ATCC 10987 / NRS 248</strain>
    </source>
</reference>
<reference key="2">
    <citation type="journal article" date="1999" name="Microbiology">
        <title>Genome organization is not conserved between Bacillus cereus and Bacillus subtilis.</title>
        <authorList>
            <person name="Oekstad O.A."/>
            <person name="Hegna I.K."/>
            <person name="Lindbaeck T."/>
            <person name="Rishovd A.-L."/>
            <person name="Kolstoe A.-B."/>
        </authorList>
    </citation>
    <scope>NUCLEOTIDE SEQUENCE [GENOMIC DNA] OF 201-557</scope>
    <source>
        <strain>ATCC 10987 / NRS 248</strain>
    </source>
</reference>
<sequence length="557" mass="59974">MRSDMIKKGFDKAPHRSLLKATGLKDEDFDKPFIAICNSFIEIIPGHKHLNEFGKLVKEAVRAAGMVPFEFNTIGVDDGIAMGHIGMRYSLPSREIIADSVETVVNAHWFDGMICIPNCDKITPGMMMAALRINIPTVFVSGGPMAAGKTSKGEVVDLSSVFEGVGAYQSGKISEEELKDIEDHGCPSCGSCSGMFTANSMNCLCEVLGLALPGNGSILAIDPRREELIKQAAEKLKILIERDIKPRDIVTEEAIDDAFALDMAMGGSTNTVLHTLALAHEAGLDYDMSRIDAVSRRVPHLCKVSPASNWHMEDIDRAGGISAILKEMSRKEGVLHLDRITATGQTLRENIAHAEIKDKEVIHSLENPHSEEGGLRILKGNLAKDGAVIKSGATEVKRFEGPCVIFNSQDEALAGIMLGKVKKGDVVVIRYEGPRGGPGMPEMLAPTSAIAGMGLGADVALLTDGRFSGASRGISVGHISPEAAAGGTIALLEQGDIVCIDVEERLLEVRVSDEELDKRKKEWKRPEPKVKTGWLGRYAQMVTSANTGAVLKVPNFD</sequence>
<organism>
    <name type="scientific">Bacillus cereus (strain ATCC 10987 / NRS 248)</name>
    <dbReference type="NCBI Taxonomy" id="222523"/>
    <lineage>
        <taxon>Bacteria</taxon>
        <taxon>Bacillati</taxon>
        <taxon>Bacillota</taxon>
        <taxon>Bacilli</taxon>
        <taxon>Bacillales</taxon>
        <taxon>Bacillaceae</taxon>
        <taxon>Bacillus</taxon>
        <taxon>Bacillus cereus group</taxon>
    </lineage>
</organism>
<accession>Q9XBI3</accession>
<evidence type="ECO:0000255" key="1">
    <source>
        <dbReference type="HAMAP-Rule" id="MF_00012"/>
    </source>
</evidence>
<evidence type="ECO:0000303" key="2">
    <source>
    </source>
</evidence>
<keyword id="KW-0001">2Fe-2S</keyword>
<keyword id="KW-0028">Amino-acid biosynthesis</keyword>
<keyword id="KW-0100">Branched-chain amino acid biosynthesis</keyword>
<keyword id="KW-0408">Iron</keyword>
<keyword id="KW-0411">Iron-sulfur</keyword>
<keyword id="KW-0456">Lyase</keyword>
<keyword id="KW-0460">Magnesium</keyword>
<keyword id="KW-0479">Metal-binding</keyword>
<comment type="function">
    <text evidence="1">Functions in the biosynthesis of branched-chain amino acids. Catalyzes the dehydration of (2R,3R)-2,3-dihydroxy-3-methylpentanoate (2,3-dihydroxy-3-methylvalerate) into 2-oxo-3-methylpentanoate (2-oxo-3-methylvalerate) and of (2R)-2,3-dihydroxy-3-methylbutanoate (2,3-dihydroxyisovalerate) into 2-oxo-3-methylbutanoate (2-oxoisovalerate), the penultimate precursor to L-isoleucine and L-valine, respectively.</text>
</comment>
<comment type="catalytic activity">
    <reaction evidence="1">
        <text>(2R)-2,3-dihydroxy-3-methylbutanoate = 3-methyl-2-oxobutanoate + H2O</text>
        <dbReference type="Rhea" id="RHEA:24809"/>
        <dbReference type="ChEBI" id="CHEBI:11851"/>
        <dbReference type="ChEBI" id="CHEBI:15377"/>
        <dbReference type="ChEBI" id="CHEBI:49072"/>
        <dbReference type="EC" id="4.2.1.9"/>
    </reaction>
    <physiologicalReaction direction="left-to-right" evidence="1">
        <dbReference type="Rhea" id="RHEA:24810"/>
    </physiologicalReaction>
</comment>
<comment type="catalytic activity">
    <reaction evidence="1">
        <text>(2R,3R)-2,3-dihydroxy-3-methylpentanoate = (S)-3-methyl-2-oxopentanoate + H2O</text>
        <dbReference type="Rhea" id="RHEA:27694"/>
        <dbReference type="ChEBI" id="CHEBI:15377"/>
        <dbReference type="ChEBI" id="CHEBI:35146"/>
        <dbReference type="ChEBI" id="CHEBI:49258"/>
        <dbReference type="EC" id="4.2.1.9"/>
    </reaction>
    <physiologicalReaction direction="left-to-right" evidence="1">
        <dbReference type="Rhea" id="RHEA:27695"/>
    </physiologicalReaction>
</comment>
<comment type="cofactor">
    <cofactor evidence="1">
        <name>[2Fe-2S] cluster</name>
        <dbReference type="ChEBI" id="CHEBI:190135"/>
    </cofactor>
    <text evidence="1">Binds 1 [2Fe-2S] cluster per subunit. This cluster acts as a Lewis acid cofactor.</text>
</comment>
<comment type="cofactor">
    <cofactor evidence="1">
        <name>Mg(2+)</name>
        <dbReference type="ChEBI" id="CHEBI:18420"/>
    </cofactor>
</comment>
<comment type="pathway">
    <text evidence="1">Amino-acid biosynthesis; L-isoleucine biosynthesis; L-isoleucine from 2-oxobutanoate: step 3/4.</text>
</comment>
<comment type="pathway">
    <text evidence="1">Amino-acid biosynthesis; L-valine biosynthesis; L-valine from pyruvate: step 3/4.</text>
</comment>
<comment type="subunit">
    <text evidence="1">Homodimer.</text>
</comment>
<comment type="similarity">
    <text evidence="1">Belongs to the IlvD/Edd family.</text>
</comment>
<dbReference type="EC" id="4.2.1.9" evidence="1"/>
<dbReference type="EMBL" id="AE017194">
    <property type="protein sequence ID" value="AAS40861.1"/>
    <property type="molecule type" value="Genomic_DNA"/>
</dbReference>
<dbReference type="EMBL" id="AJ007788">
    <property type="protein sequence ID" value="CAB40615.1"/>
    <property type="molecule type" value="Genomic_DNA"/>
</dbReference>
<dbReference type="SMR" id="Q9XBI3"/>
<dbReference type="KEGG" id="bca:BCE_1937"/>
<dbReference type="HOGENOM" id="CLU_014271_4_2_9"/>
<dbReference type="UniPathway" id="UPA00047">
    <property type="reaction ID" value="UER00057"/>
</dbReference>
<dbReference type="UniPathway" id="UPA00049">
    <property type="reaction ID" value="UER00061"/>
</dbReference>
<dbReference type="Proteomes" id="UP000002527">
    <property type="component" value="Chromosome"/>
</dbReference>
<dbReference type="GO" id="GO:0005829">
    <property type="term" value="C:cytosol"/>
    <property type="evidence" value="ECO:0007669"/>
    <property type="project" value="TreeGrafter"/>
</dbReference>
<dbReference type="GO" id="GO:0051537">
    <property type="term" value="F:2 iron, 2 sulfur cluster binding"/>
    <property type="evidence" value="ECO:0007669"/>
    <property type="project" value="UniProtKB-UniRule"/>
</dbReference>
<dbReference type="GO" id="GO:0004160">
    <property type="term" value="F:dihydroxy-acid dehydratase activity"/>
    <property type="evidence" value="ECO:0007669"/>
    <property type="project" value="UniProtKB-UniRule"/>
</dbReference>
<dbReference type="GO" id="GO:0000287">
    <property type="term" value="F:magnesium ion binding"/>
    <property type="evidence" value="ECO:0007669"/>
    <property type="project" value="UniProtKB-UniRule"/>
</dbReference>
<dbReference type="GO" id="GO:0009097">
    <property type="term" value="P:isoleucine biosynthetic process"/>
    <property type="evidence" value="ECO:0007669"/>
    <property type="project" value="UniProtKB-UniRule"/>
</dbReference>
<dbReference type="GO" id="GO:0009099">
    <property type="term" value="P:L-valine biosynthetic process"/>
    <property type="evidence" value="ECO:0007669"/>
    <property type="project" value="UniProtKB-UniRule"/>
</dbReference>
<dbReference type="FunFam" id="3.50.30.80:FF:000001">
    <property type="entry name" value="Dihydroxy-acid dehydratase"/>
    <property type="match status" value="1"/>
</dbReference>
<dbReference type="Gene3D" id="3.50.30.80">
    <property type="entry name" value="IlvD/EDD C-terminal domain-like"/>
    <property type="match status" value="1"/>
</dbReference>
<dbReference type="HAMAP" id="MF_00012">
    <property type="entry name" value="IlvD"/>
    <property type="match status" value="1"/>
</dbReference>
<dbReference type="InterPro" id="IPR042096">
    <property type="entry name" value="Dihydro-acid_dehy_C"/>
</dbReference>
<dbReference type="InterPro" id="IPR004404">
    <property type="entry name" value="DihydroxyA_deHydtase"/>
</dbReference>
<dbReference type="InterPro" id="IPR020558">
    <property type="entry name" value="DiOHA_6PGluconate_deHydtase_CS"/>
</dbReference>
<dbReference type="InterPro" id="IPR056740">
    <property type="entry name" value="ILV_EDD_C"/>
</dbReference>
<dbReference type="InterPro" id="IPR000581">
    <property type="entry name" value="ILV_EDD_N"/>
</dbReference>
<dbReference type="InterPro" id="IPR037237">
    <property type="entry name" value="IlvD/EDD_N"/>
</dbReference>
<dbReference type="NCBIfam" id="TIGR00110">
    <property type="entry name" value="ilvD"/>
    <property type="match status" value="1"/>
</dbReference>
<dbReference type="NCBIfam" id="NF002068">
    <property type="entry name" value="PRK00911.1"/>
    <property type="match status" value="1"/>
</dbReference>
<dbReference type="PANTHER" id="PTHR43661">
    <property type="entry name" value="D-XYLONATE DEHYDRATASE"/>
    <property type="match status" value="1"/>
</dbReference>
<dbReference type="PANTHER" id="PTHR43661:SF3">
    <property type="entry name" value="D-XYLONATE DEHYDRATASE YAGF-RELATED"/>
    <property type="match status" value="1"/>
</dbReference>
<dbReference type="Pfam" id="PF24877">
    <property type="entry name" value="ILV_EDD_C"/>
    <property type="match status" value="1"/>
</dbReference>
<dbReference type="Pfam" id="PF00920">
    <property type="entry name" value="ILVD_EDD_N"/>
    <property type="match status" value="1"/>
</dbReference>
<dbReference type="SUPFAM" id="SSF143975">
    <property type="entry name" value="IlvD/EDD N-terminal domain-like"/>
    <property type="match status" value="1"/>
</dbReference>
<dbReference type="SUPFAM" id="SSF52016">
    <property type="entry name" value="LeuD/IlvD-like"/>
    <property type="match status" value="1"/>
</dbReference>
<dbReference type="PROSITE" id="PS00886">
    <property type="entry name" value="ILVD_EDD_1"/>
    <property type="match status" value="1"/>
</dbReference>
<dbReference type="PROSITE" id="PS00887">
    <property type="entry name" value="ILVD_EDD_2"/>
    <property type="match status" value="1"/>
</dbReference>
<name>ILVD_BACC1</name>
<feature type="chain" id="PRO_0000103428" description="Dihydroxy-acid dehydratase">
    <location>
        <begin position="1"/>
        <end position="557"/>
    </location>
</feature>
<feature type="active site" description="Proton acceptor" evidence="1">
    <location>
        <position position="468"/>
    </location>
</feature>
<feature type="binding site" evidence="1">
    <location>
        <position position="78"/>
    </location>
    <ligand>
        <name>Mg(2+)</name>
        <dbReference type="ChEBI" id="CHEBI:18420"/>
    </ligand>
</feature>
<feature type="binding site" evidence="1">
    <location>
        <position position="119"/>
    </location>
    <ligand>
        <name>[2Fe-2S] cluster</name>
        <dbReference type="ChEBI" id="CHEBI:190135"/>
    </ligand>
</feature>
<feature type="binding site" evidence="1">
    <location>
        <position position="120"/>
    </location>
    <ligand>
        <name>Mg(2+)</name>
        <dbReference type="ChEBI" id="CHEBI:18420"/>
    </ligand>
</feature>
<feature type="binding site" description="via carbamate group" evidence="1">
    <location>
        <position position="121"/>
    </location>
    <ligand>
        <name>Mg(2+)</name>
        <dbReference type="ChEBI" id="CHEBI:18420"/>
    </ligand>
</feature>
<feature type="binding site" evidence="1">
    <location>
        <position position="192"/>
    </location>
    <ligand>
        <name>[2Fe-2S] cluster</name>
        <dbReference type="ChEBI" id="CHEBI:190135"/>
    </ligand>
</feature>
<feature type="binding site" evidence="1">
    <location>
        <position position="442"/>
    </location>
    <ligand>
        <name>Mg(2+)</name>
        <dbReference type="ChEBI" id="CHEBI:18420"/>
    </ligand>
</feature>
<feature type="modified residue" description="N6-carboxylysine" evidence="1">
    <location>
        <position position="121"/>
    </location>
</feature>